<comment type="function">
    <text evidence="1">A key translational regulator that binds mRNA to regulate translation initiation and/or mRNA stability. Mediates global changes in gene expression, shifting from rapid growth to stress survival by linking envelope stress, the stringent response and the catabolite repression systems. Usually binds in the 5'-UTR; binding at or near the Shine-Dalgarno sequence prevents ribosome-binding, repressing translation, binding elsewhere in the 5'-UTR can activate translation and/or stabilize the mRNA. Its function is antagonized by small RNA(s).</text>
</comment>
<comment type="subunit">
    <text evidence="1">Homodimer; the beta-strands of each monomer intercalate to form a hydrophobic core, while the alpha-helices form wings that extend away from the core.</text>
</comment>
<comment type="subcellular location">
    <subcellularLocation>
        <location evidence="1">Cytoplasm</location>
    </subcellularLocation>
</comment>
<comment type="similarity">
    <text evidence="1">Belongs to the CsrA/RsmA family.</text>
</comment>
<sequence>MLILTRRVGETLMIGDEVTVTVLGVKGNQVRIGVNAPKEVSVHREEIYQRIQAEKSQQSSY</sequence>
<reference key="1">
    <citation type="journal article" date="2008" name="J. Bacteriol.">
        <title>The pangenome structure of Escherichia coli: comparative genomic analysis of E. coli commensal and pathogenic isolates.</title>
        <authorList>
            <person name="Rasko D.A."/>
            <person name="Rosovitz M.J."/>
            <person name="Myers G.S.A."/>
            <person name="Mongodin E.F."/>
            <person name="Fricke W.F."/>
            <person name="Gajer P."/>
            <person name="Crabtree J."/>
            <person name="Sebaihia M."/>
            <person name="Thomson N.R."/>
            <person name="Chaudhuri R."/>
            <person name="Henderson I.R."/>
            <person name="Sperandio V."/>
            <person name="Ravel J."/>
        </authorList>
    </citation>
    <scope>NUCLEOTIDE SEQUENCE [LARGE SCALE GENOMIC DNA]</scope>
    <source>
        <strain>HS</strain>
    </source>
</reference>
<name>CSRA_ECOHS</name>
<evidence type="ECO:0000255" key="1">
    <source>
        <dbReference type="HAMAP-Rule" id="MF_00167"/>
    </source>
</evidence>
<feature type="chain" id="PRO_1000058269" description="Translational regulator CsrA">
    <location>
        <begin position="1"/>
        <end position="61"/>
    </location>
</feature>
<accession>A8A3H3</accession>
<keyword id="KW-0010">Activator</keyword>
<keyword id="KW-0963">Cytoplasm</keyword>
<keyword id="KW-0678">Repressor</keyword>
<keyword id="KW-0694">RNA-binding</keyword>
<keyword id="KW-0810">Translation regulation</keyword>
<dbReference type="EMBL" id="CP000802">
    <property type="protein sequence ID" value="ABV07077.1"/>
    <property type="molecule type" value="Genomic_DNA"/>
</dbReference>
<dbReference type="RefSeq" id="WP_000906486.1">
    <property type="nucleotide sequence ID" value="NC_009800.1"/>
</dbReference>
<dbReference type="SMR" id="A8A3H3"/>
<dbReference type="GeneID" id="98389839"/>
<dbReference type="KEGG" id="ecx:EcHS_A2832"/>
<dbReference type="HOGENOM" id="CLU_164837_2_1_6"/>
<dbReference type="GO" id="GO:0005829">
    <property type="term" value="C:cytosol"/>
    <property type="evidence" value="ECO:0007669"/>
    <property type="project" value="TreeGrafter"/>
</dbReference>
<dbReference type="GO" id="GO:0048027">
    <property type="term" value="F:mRNA 5'-UTR binding"/>
    <property type="evidence" value="ECO:0007669"/>
    <property type="project" value="UniProtKB-UniRule"/>
</dbReference>
<dbReference type="GO" id="GO:0006402">
    <property type="term" value="P:mRNA catabolic process"/>
    <property type="evidence" value="ECO:0007669"/>
    <property type="project" value="InterPro"/>
</dbReference>
<dbReference type="GO" id="GO:0045947">
    <property type="term" value="P:negative regulation of translational initiation"/>
    <property type="evidence" value="ECO:0007669"/>
    <property type="project" value="UniProtKB-UniRule"/>
</dbReference>
<dbReference type="GO" id="GO:0045948">
    <property type="term" value="P:positive regulation of translational initiation"/>
    <property type="evidence" value="ECO:0007669"/>
    <property type="project" value="UniProtKB-UniRule"/>
</dbReference>
<dbReference type="GO" id="GO:0006109">
    <property type="term" value="P:regulation of carbohydrate metabolic process"/>
    <property type="evidence" value="ECO:0007669"/>
    <property type="project" value="UniProtKB-UniRule"/>
</dbReference>
<dbReference type="FunFam" id="2.60.40.4380:FF:000001">
    <property type="entry name" value="Translational regulator CsrA"/>
    <property type="match status" value="1"/>
</dbReference>
<dbReference type="Gene3D" id="2.60.40.4380">
    <property type="entry name" value="Translational regulator CsrA"/>
    <property type="match status" value="1"/>
</dbReference>
<dbReference type="HAMAP" id="MF_00167">
    <property type="entry name" value="CsrA"/>
    <property type="match status" value="1"/>
</dbReference>
<dbReference type="InterPro" id="IPR003751">
    <property type="entry name" value="CsrA"/>
</dbReference>
<dbReference type="InterPro" id="IPR036107">
    <property type="entry name" value="CsrA_sf"/>
</dbReference>
<dbReference type="NCBIfam" id="TIGR00202">
    <property type="entry name" value="csrA"/>
    <property type="match status" value="1"/>
</dbReference>
<dbReference type="NCBIfam" id="NF002469">
    <property type="entry name" value="PRK01712.1"/>
    <property type="match status" value="1"/>
</dbReference>
<dbReference type="PANTHER" id="PTHR34984">
    <property type="entry name" value="CARBON STORAGE REGULATOR"/>
    <property type="match status" value="1"/>
</dbReference>
<dbReference type="PANTHER" id="PTHR34984:SF1">
    <property type="entry name" value="CARBON STORAGE REGULATOR"/>
    <property type="match status" value="1"/>
</dbReference>
<dbReference type="Pfam" id="PF02599">
    <property type="entry name" value="CsrA"/>
    <property type="match status" value="1"/>
</dbReference>
<dbReference type="SUPFAM" id="SSF117130">
    <property type="entry name" value="CsrA-like"/>
    <property type="match status" value="1"/>
</dbReference>
<protein>
    <recommendedName>
        <fullName evidence="1">Translational regulator CsrA</fullName>
    </recommendedName>
    <alternativeName>
        <fullName evidence="1">Carbon storage regulator</fullName>
    </alternativeName>
</protein>
<proteinExistence type="inferred from homology"/>
<gene>
    <name evidence="1" type="primary">csrA</name>
    <name type="ordered locus">EcHS_A2832</name>
</gene>
<organism>
    <name type="scientific">Escherichia coli O9:H4 (strain HS)</name>
    <dbReference type="NCBI Taxonomy" id="331112"/>
    <lineage>
        <taxon>Bacteria</taxon>
        <taxon>Pseudomonadati</taxon>
        <taxon>Pseudomonadota</taxon>
        <taxon>Gammaproteobacteria</taxon>
        <taxon>Enterobacterales</taxon>
        <taxon>Enterobacteriaceae</taxon>
        <taxon>Escherichia</taxon>
    </lineage>
</organism>